<proteinExistence type="inferred from homology"/>
<evidence type="ECO:0000255" key="1">
    <source>
        <dbReference type="HAMAP-Rule" id="MF_00117"/>
    </source>
</evidence>
<evidence type="ECO:0000305" key="2"/>
<dbReference type="EMBL" id="CP000034">
    <property type="protein sequence ID" value="ABB63642.1"/>
    <property type="status" value="ALT_INIT"/>
    <property type="molecule type" value="Genomic_DNA"/>
</dbReference>
<dbReference type="RefSeq" id="WP_001135574.1">
    <property type="nucleotide sequence ID" value="NC_007606.1"/>
</dbReference>
<dbReference type="RefSeq" id="YP_405133.2">
    <property type="nucleotide sequence ID" value="NC_007606.1"/>
</dbReference>
<dbReference type="SMR" id="Q32AL3"/>
<dbReference type="STRING" id="300267.SDY_3677"/>
<dbReference type="EnsemblBacteria" id="ABB63642">
    <property type="protein sequence ID" value="ABB63642"/>
    <property type="gene ID" value="SDY_3677"/>
</dbReference>
<dbReference type="GeneID" id="93778597"/>
<dbReference type="KEGG" id="sdy:SDY_3677"/>
<dbReference type="PATRIC" id="fig|300267.13.peg.4364"/>
<dbReference type="HOGENOM" id="CLU_054493_0_0_6"/>
<dbReference type="Proteomes" id="UP000002716">
    <property type="component" value="Chromosome"/>
</dbReference>
<dbReference type="GO" id="GO:0005737">
    <property type="term" value="C:cytoplasm"/>
    <property type="evidence" value="ECO:0007669"/>
    <property type="project" value="UniProtKB-SubCell"/>
</dbReference>
<dbReference type="GO" id="GO:0044183">
    <property type="term" value="F:protein folding chaperone"/>
    <property type="evidence" value="ECO:0007669"/>
    <property type="project" value="TreeGrafter"/>
</dbReference>
<dbReference type="GO" id="GO:0051082">
    <property type="term" value="F:unfolded protein binding"/>
    <property type="evidence" value="ECO:0007669"/>
    <property type="project" value="UniProtKB-UniRule"/>
</dbReference>
<dbReference type="GO" id="GO:0042026">
    <property type="term" value="P:protein refolding"/>
    <property type="evidence" value="ECO:0007669"/>
    <property type="project" value="TreeGrafter"/>
</dbReference>
<dbReference type="CDD" id="cd00498">
    <property type="entry name" value="Hsp33"/>
    <property type="match status" value="1"/>
</dbReference>
<dbReference type="FunFam" id="3.55.30.10:FF:000001">
    <property type="entry name" value="33 kDa chaperonin"/>
    <property type="match status" value="1"/>
</dbReference>
<dbReference type="Gene3D" id="1.10.287.480">
    <property type="entry name" value="helix hairpin bin"/>
    <property type="match status" value="1"/>
</dbReference>
<dbReference type="Gene3D" id="3.55.30.10">
    <property type="entry name" value="Hsp33 domain"/>
    <property type="match status" value="1"/>
</dbReference>
<dbReference type="Gene3D" id="3.90.1280.10">
    <property type="entry name" value="HSP33 redox switch-like"/>
    <property type="match status" value="1"/>
</dbReference>
<dbReference type="HAMAP" id="MF_00117">
    <property type="entry name" value="HslO"/>
    <property type="match status" value="1"/>
</dbReference>
<dbReference type="InterPro" id="IPR000397">
    <property type="entry name" value="Heat_shock_Hsp33"/>
</dbReference>
<dbReference type="InterPro" id="IPR016154">
    <property type="entry name" value="Heat_shock_Hsp33_C"/>
</dbReference>
<dbReference type="InterPro" id="IPR016153">
    <property type="entry name" value="Heat_shock_Hsp33_N"/>
</dbReference>
<dbReference type="InterPro" id="IPR023212">
    <property type="entry name" value="Hsp33_helix_hairpin_bin_dom_sf"/>
</dbReference>
<dbReference type="NCBIfam" id="NF001033">
    <property type="entry name" value="PRK00114.1"/>
    <property type="match status" value="1"/>
</dbReference>
<dbReference type="PANTHER" id="PTHR30111">
    <property type="entry name" value="33 KDA CHAPERONIN"/>
    <property type="match status" value="1"/>
</dbReference>
<dbReference type="PANTHER" id="PTHR30111:SF1">
    <property type="entry name" value="33 KDA CHAPERONIN"/>
    <property type="match status" value="1"/>
</dbReference>
<dbReference type="Pfam" id="PF01430">
    <property type="entry name" value="HSP33"/>
    <property type="match status" value="1"/>
</dbReference>
<dbReference type="PIRSF" id="PIRSF005261">
    <property type="entry name" value="Heat_shock_Hsp33"/>
    <property type="match status" value="1"/>
</dbReference>
<dbReference type="SUPFAM" id="SSF64397">
    <property type="entry name" value="Hsp33 domain"/>
    <property type="match status" value="1"/>
</dbReference>
<dbReference type="SUPFAM" id="SSF118352">
    <property type="entry name" value="HSP33 redox switch-like"/>
    <property type="match status" value="1"/>
</dbReference>
<comment type="function">
    <text evidence="1">Redox regulated molecular chaperone. Protects both thermally unfolding and oxidatively damaged proteins from irreversible aggregation. Plays an important role in the bacterial defense system toward oxidative stress.</text>
</comment>
<comment type="subcellular location">
    <subcellularLocation>
        <location evidence="1">Cytoplasm</location>
    </subcellularLocation>
</comment>
<comment type="PTM">
    <text evidence="1">Under oxidizing conditions two disulfide bonds are formed involving the reactive cysteines. Under reducing conditions zinc is bound to the reactive cysteines and the protein is inactive.</text>
</comment>
<comment type="similarity">
    <text evidence="1">Belongs to the HSP33 family.</text>
</comment>
<comment type="sequence caution" evidence="2">
    <conflict type="erroneous initiation">
        <sequence resource="EMBL-CDS" id="ABB63642"/>
    </conflict>
</comment>
<keyword id="KW-0143">Chaperone</keyword>
<keyword id="KW-0963">Cytoplasm</keyword>
<keyword id="KW-1015">Disulfide bond</keyword>
<keyword id="KW-0676">Redox-active center</keyword>
<keyword id="KW-1185">Reference proteome</keyword>
<keyword id="KW-0862">Zinc</keyword>
<protein>
    <recommendedName>
        <fullName evidence="1">33 kDa chaperonin</fullName>
    </recommendedName>
    <alternativeName>
        <fullName evidence="1">Heat shock protein 33 homolog</fullName>
        <shortName evidence="1">HSP33</shortName>
    </alternativeName>
</protein>
<gene>
    <name evidence="1" type="primary">hslO</name>
    <name type="ordered locus">SDY_3677</name>
</gene>
<reference key="1">
    <citation type="journal article" date="2005" name="Nucleic Acids Res.">
        <title>Genome dynamics and diversity of Shigella species, the etiologic agents of bacillary dysentery.</title>
        <authorList>
            <person name="Yang F."/>
            <person name="Yang J."/>
            <person name="Zhang X."/>
            <person name="Chen L."/>
            <person name="Jiang Y."/>
            <person name="Yan Y."/>
            <person name="Tang X."/>
            <person name="Wang J."/>
            <person name="Xiong Z."/>
            <person name="Dong J."/>
            <person name="Xue Y."/>
            <person name="Zhu Y."/>
            <person name="Xu X."/>
            <person name="Sun L."/>
            <person name="Chen S."/>
            <person name="Nie H."/>
            <person name="Peng J."/>
            <person name="Xu J."/>
            <person name="Wang Y."/>
            <person name="Yuan Z."/>
            <person name="Wen Y."/>
            <person name="Yao Z."/>
            <person name="Shen Y."/>
            <person name="Qiang B."/>
            <person name="Hou Y."/>
            <person name="Yu J."/>
            <person name="Jin Q."/>
        </authorList>
    </citation>
    <scope>NUCLEOTIDE SEQUENCE [LARGE SCALE GENOMIC DNA]</scope>
    <source>
        <strain>Sd197</strain>
    </source>
</reference>
<feature type="chain" id="PRO_0000238090" description="33 kDa chaperonin">
    <location>
        <begin position="1"/>
        <end position="292"/>
    </location>
</feature>
<feature type="disulfide bond" description="Redox-active" evidence="1">
    <location>
        <begin position="230"/>
        <end position="232"/>
    </location>
</feature>
<feature type="disulfide bond" description="Redox-active" evidence="1">
    <location>
        <begin position="263"/>
        <end position="266"/>
    </location>
</feature>
<name>HSLO_SHIDS</name>
<sequence>MPQHDQLHRYLFENFAVRGELVTVSETLQQILENHDYPQPVKNVLAELLVATSLLTATLKFDGDITVQLQGDGPMNLAVINGNNNQQMRGVARVQGEIPENADLKTLVGNGYVVITITPSEGERYQGVVGLEGDTLAACLEDYFMRSEQLPTRLFIRTGDVDGKPAAGGMLLQVMPAQNAQQDDFDHLATLTETIKTEELLTLPANEVLWRLYHEEEVTVYDPQDVEFKCTCSRERCADALKTLPDEEVDSILAEDGEIDMHCDYCGNHYLFNAMDIAEIRNNASPADPQVH</sequence>
<organism>
    <name type="scientific">Shigella dysenteriae serotype 1 (strain Sd197)</name>
    <dbReference type="NCBI Taxonomy" id="300267"/>
    <lineage>
        <taxon>Bacteria</taxon>
        <taxon>Pseudomonadati</taxon>
        <taxon>Pseudomonadota</taxon>
        <taxon>Gammaproteobacteria</taxon>
        <taxon>Enterobacterales</taxon>
        <taxon>Enterobacteriaceae</taxon>
        <taxon>Shigella</taxon>
    </lineage>
</organism>
<accession>Q32AL3</accession>